<sequence length="127" mass="13708">MSKASYVKFEVPQDLADKVLEAVRKAKESGKIKKGTNETTKAVERGQAKLVVIAEDVQPEEIVAHLPLLCDEKKIPYVYVSSKKALGEACGLQVATASAAILEPGEAKDLVDEIVKRVNEIKGKTSS</sequence>
<dbReference type="EMBL" id="CP001400">
    <property type="protein sequence ID" value="ACP38773.1"/>
    <property type="molecule type" value="Genomic_DNA"/>
</dbReference>
<dbReference type="RefSeq" id="WP_012711999.1">
    <property type="nucleotide sequence ID" value="NC_012588.1"/>
</dbReference>
<dbReference type="SMR" id="C3MYY9"/>
<dbReference type="GeneID" id="84062343"/>
<dbReference type="KEGG" id="sia:M1425_2032"/>
<dbReference type="HOGENOM" id="CLU_084513_4_0_2"/>
<dbReference type="Proteomes" id="UP000001350">
    <property type="component" value="Chromosome"/>
</dbReference>
<dbReference type="GO" id="GO:0005737">
    <property type="term" value="C:cytoplasm"/>
    <property type="evidence" value="ECO:0007669"/>
    <property type="project" value="UniProtKB-SubCell"/>
</dbReference>
<dbReference type="GO" id="GO:1990904">
    <property type="term" value="C:ribonucleoprotein complex"/>
    <property type="evidence" value="ECO:0007669"/>
    <property type="project" value="UniProtKB-KW"/>
</dbReference>
<dbReference type="GO" id="GO:0005840">
    <property type="term" value="C:ribosome"/>
    <property type="evidence" value="ECO:0007669"/>
    <property type="project" value="UniProtKB-KW"/>
</dbReference>
<dbReference type="GO" id="GO:0004526">
    <property type="term" value="F:ribonuclease P activity"/>
    <property type="evidence" value="ECO:0007669"/>
    <property type="project" value="UniProtKB-UniRule"/>
</dbReference>
<dbReference type="GO" id="GO:0019843">
    <property type="term" value="F:rRNA binding"/>
    <property type="evidence" value="ECO:0007669"/>
    <property type="project" value="UniProtKB-KW"/>
</dbReference>
<dbReference type="GO" id="GO:0003735">
    <property type="term" value="F:structural constituent of ribosome"/>
    <property type="evidence" value="ECO:0007669"/>
    <property type="project" value="InterPro"/>
</dbReference>
<dbReference type="GO" id="GO:0042254">
    <property type="term" value="P:ribosome biogenesis"/>
    <property type="evidence" value="ECO:0007669"/>
    <property type="project" value="InterPro"/>
</dbReference>
<dbReference type="GO" id="GO:0006412">
    <property type="term" value="P:translation"/>
    <property type="evidence" value="ECO:0007669"/>
    <property type="project" value="UniProtKB-UniRule"/>
</dbReference>
<dbReference type="GO" id="GO:0001682">
    <property type="term" value="P:tRNA 5'-leader removal"/>
    <property type="evidence" value="ECO:0007669"/>
    <property type="project" value="UniProtKB-UniRule"/>
</dbReference>
<dbReference type="FunFam" id="3.30.1330.30:FF:000020">
    <property type="entry name" value="50S ribosomal protein L7Ae"/>
    <property type="match status" value="1"/>
</dbReference>
<dbReference type="Gene3D" id="3.30.1330.30">
    <property type="match status" value="1"/>
</dbReference>
<dbReference type="HAMAP" id="MF_00326">
    <property type="entry name" value="Ribosomal_eL8"/>
    <property type="match status" value="1"/>
</dbReference>
<dbReference type="InterPro" id="IPR050257">
    <property type="entry name" value="eL8/uL1-like"/>
</dbReference>
<dbReference type="InterPro" id="IPR029064">
    <property type="entry name" value="Ribosomal_eL30-like_sf"/>
</dbReference>
<dbReference type="InterPro" id="IPR004037">
    <property type="entry name" value="Ribosomal_eL8-like_CS"/>
</dbReference>
<dbReference type="InterPro" id="IPR004038">
    <property type="entry name" value="Ribosomal_eL8/eL30/eS12/Gad45"/>
</dbReference>
<dbReference type="InterPro" id="IPR018492">
    <property type="entry name" value="Ribosomal_eL8/Nhp2"/>
</dbReference>
<dbReference type="InterPro" id="IPR022481">
    <property type="entry name" value="Ribosomal_eL8_arc"/>
</dbReference>
<dbReference type="NCBIfam" id="TIGR03677">
    <property type="entry name" value="eL8_ribo"/>
    <property type="match status" value="1"/>
</dbReference>
<dbReference type="PANTHER" id="PTHR23105">
    <property type="entry name" value="RIBOSOMAL PROTEIN L7AE FAMILY MEMBER"/>
    <property type="match status" value="1"/>
</dbReference>
<dbReference type="Pfam" id="PF01248">
    <property type="entry name" value="Ribosomal_L7Ae"/>
    <property type="match status" value="1"/>
</dbReference>
<dbReference type="PRINTS" id="PR00881">
    <property type="entry name" value="L7ARS6FAMILY"/>
</dbReference>
<dbReference type="PRINTS" id="PR00884">
    <property type="entry name" value="RIBOSOMALHS6"/>
</dbReference>
<dbReference type="SUPFAM" id="SSF55315">
    <property type="entry name" value="L30e-like"/>
    <property type="match status" value="1"/>
</dbReference>
<dbReference type="PROSITE" id="PS01082">
    <property type="entry name" value="RIBOSOMAL_L7AE"/>
    <property type="match status" value="1"/>
</dbReference>
<gene>
    <name evidence="1" type="primary">rpl7ae</name>
    <name type="ordered locus">M1425_2032</name>
</gene>
<accession>C3MYY9</accession>
<comment type="function">
    <text evidence="1">Multifunctional RNA-binding protein that recognizes the K-turn motif in ribosomal RNA, the RNA component of RNase P, box H/ACA, box C/D and box C'/D' sRNAs.</text>
</comment>
<comment type="subunit">
    <text evidence="1">Part of the 50S ribosomal subunit. Probably part of the RNase P complex.</text>
</comment>
<comment type="subcellular location">
    <subcellularLocation>
        <location evidence="1">Cytoplasm</location>
    </subcellularLocation>
</comment>
<comment type="similarity">
    <text evidence="1">Belongs to the eukaryotic ribosomal protein eL8 family.</text>
</comment>
<evidence type="ECO:0000255" key="1">
    <source>
        <dbReference type="HAMAP-Rule" id="MF_00326"/>
    </source>
</evidence>
<evidence type="ECO:0000305" key="2"/>
<protein>
    <recommendedName>
        <fullName evidence="1">Large ribosomal subunit protein eL8</fullName>
    </recommendedName>
    <alternativeName>
        <fullName evidence="2">50S ribosomal protein L7Ae</fullName>
    </alternativeName>
    <alternativeName>
        <fullName evidence="1">Ribosomal protein L8e</fullName>
    </alternativeName>
</protein>
<name>RL7A_SACI4</name>
<feature type="chain" id="PRO_1000205162" description="Large ribosomal subunit protein eL8">
    <location>
        <begin position="1"/>
        <end position="127"/>
    </location>
</feature>
<keyword id="KW-0963">Cytoplasm</keyword>
<keyword id="KW-0687">Ribonucleoprotein</keyword>
<keyword id="KW-0689">Ribosomal protein</keyword>
<keyword id="KW-0694">RNA-binding</keyword>
<keyword id="KW-0699">rRNA-binding</keyword>
<keyword id="KW-0819">tRNA processing</keyword>
<reference key="1">
    <citation type="journal article" date="2009" name="Proc. Natl. Acad. Sci. U.S.A.">
        <title>Biogeography of the Sulfolobus islandicus pan-genome.</title>
        <authorList>
            <person name="Reno M.L."/>
            <person name="Held N.L."/>
            <person name="Fields C.J."/>
            <person name="Burke P.V."/>
            <person name="Whitaker R.J."/>
        </authorList>
    </citation>
    <scope>NUCLEOTIDE SEQUENCE [LARGE SCALE GENOMIC DNA]</scope>
    <source>
        <strain>M.14.25 / Kamchatka #1</strain>
    </source>
</reference>
<proteinExistence type="inferred from homology"/>
<organism>
    <name type="scientific">Saccharolobus islandicus (strain M.14.25 / Kamchatka #1)</name>
    <name type="common">Sulfolobus islandicus</name>
    <dbReference type="NCBI Taxonomy" id="427317"/>
    <lineage>
        <taxon>Archaea</taxon>
        <taxon>Thermoproteota</taxon>
        <taxon>Thermoprotei</taxon>
        <taxon>Sulfolobales</taxon>
        <taxon>Sulfolobaceae</taxon>
        <taxon>Saccharolobus</taxon>
    </lineage>
</organism>